<evidence type="ECO:0000250" key="1"/>
<evidence type="ECO:0000250" key="2">
    <source>
        <dbReference type="UniProtKB" id="Q64438"/>
    </source>
</evidence>
<evidence type="ECO:0000250" key="3">
    <source>
        <dbReference type="UniProtKB" id="Q93091"/>
    </source>
</evidence>
<evidence type="ECO:0000250" key="4">
    <source>
        <dbReference type="UniProtKB" id="Q9H1E1"/>
    </source>
</evidence>
<evidence type="ECO:0000255" key="5"/>
<evidence type="ECO:0000305" key="6"/>
<comment type="function">
    <text evidence="3">Ribonuclease which shows a preference for the pyrimidines uridine and cytosine. Has potent antibacterial activity against a range of Gram-positive and Gram-negative bacteria, including P.aeruginosa, A.baumanii, M.luteus, S.aureus, E.faecalis, E.faecium, S.saprophyticus and E.coli. Causes loss of bacterial membrane integrity, and also promotes agglutination of Gram-negative bacteria. Probably contributes to urinary tract sterility. Bactericidal activity is independent of RNase activity.</text>
</comment>
<comment type="subunit">
    <text evidence="3">Interacts (via N-terminus) with bacterial lipopolysaccharide (LPS).</text>
</comment>
<comment type="subcellular location">
    <subcellularLocation>
        <location evidence="3">Secreted</location>
    </subcellularLocation>
    <subcellularLocation>
        <location evidence="3">Lysosome</location>
    </subcellularLocation>
    <subcellularLocation>
        <location evidence="3">Cytoplasmic granule</location>
    </subcellularLocation>
</comment>
<comment type="similarity">
    <text evidence="6">Belongs to the pancreatic ribonuclease family.</text>
</comment>
<name>RNAS6_AOTTR</name>
<dbReference type="EC" id="3.1.27.-"/>
<dbReference type="EMBL" id="AF037084">
    <property type="protein sequence ID" value="AAB94746.1"/>
    <property type="molecule type" value="Genomic_DNA"/>
</dbReference>
<dbReference type="SMR" id="O46528"/>
<dbReference type="GlyCosmos" id="O46528">
    <property type="glycosylation" value="2 sites, No reported glycans"/>
</dbReference>
<dbReference type="GO" id="GO:0005615">
    <property type="term" value="C:extracellular space"/>
    <property type="evidence" value="ECO:0007669"/>
    <property type="project" value="TreeGrafter"/>
</dbReference>
<dbReference type="GO" id="GO:0005764">
    <property type="term" value="C:lysosome"/>
    <property type="evidence" value="ECO:0007669"/>
    <property type="project" value="UniProtKB-SubCell"/>
</dbReference>
<dbReference type="GO" id="GO:0004519">
    <property type="term" value="F:endonuclease activity"/>
    <property type="evidence" value="ECO:0007669"/>
    <property type="project" value="UniProtKB-KW"/>
</dbReference>
<dbReference type="GO" id="GO:0003676">
    <property type="term" value="F:nucleic acid binding"/>
    <property type="evidence" value="ECO:0007669"/>
    <property type="project" value="InterPro"/>
</dbReference>
<dbReference type="GO" id="GO:0004540">
    <property type="term" value="F:RNA nuclease activity"/>
    <property type="evidence" value="ECO:0007669"/>
    <property type="project" value="TreeGrafter"/>
</dbReference>
<dbReference type="GO" id="GO:0019731">
    <property type="term" value="P:antibacterial humoral response"/>
    <property type="evidence" value="ECO:0007669"/>
    <property type="project" value="TreeGrafter"/>
</dbReference>
<dbReference type="GO" id="GO:0061844">
    <property type="term" value="P:antimicrobial humoral immune response mediated by antimicrobial peptide"/>
    <property type="evidence" value="ECO:0007669"/>
    <property type="project" value="TreeGrafter"/>
</dbReference>
<dbReference type="GO" id="GO:0050829">
    <property type="term" value="P:defense response to Gram-negative bacterium"/>
    <property type="evidence" value="ECO:0007669"/>
    <property type="project" value="TreeGrafter"/>
</dbReference>
<dbReference type="GO" id="GO:0050830">
    <property type="term" value="P:defense response to Gram-positive bacterium"/>
    <property type="evidence" value="ECO:0007669"/>
    <property type="project" value="TreeGrafter"/>
</dbReference>
<dbReference type="GO" id="GO:0045087">
    <property type="term" value="P:innate immune response"/>
    <property type="evidence" value="ECO:0007669"/>
    <property type="project" value="TreeGrafter"/>
</dbReference>
<dbReference type="CDD" id="cd06265">
    <property type="entry name" value="RNase_A_canonical"/>
    <property type="match status" value="1"/>
</dbReference>
<dbReference type="FunFam" id="3.10.130.10:FF:000001">
    <property type="entry name" value="Ribonuclease pancreatic"/>
    <property type="match status" value="1"/>
</dbReference>
<dbReference type="Gene3D" id="3.10.130.10">
    <property type="entry name" value="Ribonuclease A-like domain"/>
    <property type="match status" value="1"/>
</dbReference>
<dbReference type="InterPro" id="IPR001427">
    <property type="entry name" value="RNaseA"/>
</dbReference>
<dbReference type="InterPro" id="IPR036816">
    <property type="entry name" value="RNaseA-like_dom_sf"/>
</dbReference>
<dbReference type="InterPro" id="IPR023411">
    <property type="entry name" value="RNaseA_AS"/>
</dbReference>
<dbReference type="InterPro" id="IPR023412">
    <property type="entry name" value="RNaseA_domain"/>
</dbReference>
<dbReference type="PANTHER" id="PTHR11437">
    <property type="entry name" value="RIBONUCLEASE"/>
    <property type="match status" value="1"/>
</dbReference>
<dbReference type="PANTHER" id="PTHR11437:SF4">
    <property type="entry name" value="RIBONUCLEASE K6"/>
    <property type="match status" value="1"/>
</dbReference>
<dbReference type="Pfam" id="PF00074">
    <property type="entry name" value="RnaseA"/>
    <property type="match status" value="1"/>
</dbReference>
<dbReference type="PRINTS" id="PR00794">
    <property type="entry name" value="RIBONUCLEASE"/>
</dbReference>
<dbReference type="SMART" id="SM00092">
    <property type="entry name" value="RNAse_Pc"/>
    <property type="match status" value="1"/>
</dbReference>
<dbReference type="SUPFAM" id="SSF54076">
    <property type="entry name" value="RNase A-like"/>
    <property type="match status" value="1"/>
</dbReference>
<dbReference type="PROSITE" id="PS00127">
    <property type="entry name" value="RNASE_PANCREATIC"/>
    <property type="match status" value="1"/>
</dbReference>
<keyword id="KW-0044">Antibiotic</keyword>
<keyword id="KW-0929">Antimicrobial</keyword>
<keyword id="KW-1015">Disulfide bond</keyword>
<keyword id="KW-0255">Endonuclease</keyword>
<keyword id="KW-0325">Glycoprotein</keyword>
<keyword id="KW-0378">Hydrolase</keyword>
<keyword id="KW-0458">Lysosome</keyword>
<keyword id="KW-0540">Nuclease</keyword>
<keyword id="KW-0964">Secreted</keyword>
<keyword id="KW-0732">Signal</keyword>
<organism>
    <name type="scientific">Aotus trivirgatus</name>
    <name type="common">Three-striped night monkey</name>
    <name type="synonym">Douroucouli</name>
    <dbReference type="NCBI Taxonomy" id="9505"/>
    <lineage>
        <taxon>Eukaryota</taxon>
        <taxon>Metazoa</taxon>
        <taxon>Chordata</taxon>
        <taxon>Craniata</taxon>
        <taxon>Vertebrata</taxon>
        <taxon>Euteleostomi</taxon>
        <taxon>Mammalia</taxon>
        <taxon>Eutheria</taxon>
        <taxon>Euarchontoglires</taxon>
        <taxon>Primates</taxon>
        <taxon>Haplorrhini</taxon>
        <taxon>Platyrrhini</taxon>
        <taxon>Aotidae</taxon>
        <taxon>Aotus</taxon>
    </lineage>
</organism>
<protein>
    <recommendedName>
        <fullName>Ribonuclease K6</fullName>
        <shortName>RNase K6</shortName>
        <ecNumber>3.1.27.-</ecNumber>
    </recommendedName>
</protein>
<accession>O46528</accession>
<proteinExistence type="inferred from homology"/>
<gene>
    <name type="primary">RNASE6</name>
</gene>
<feature type="signal peptide" evidence="1">
    <location>
        <begin position="1"/>
        <end position="23"/>
    </location>
</feature>
<feature type="chain" id="PRO_0000030889" description="Ribonuclease K6">
    <location>
        <begin position="24"/>
        <end position="150"/>
    </location>
</feature>
<feature type="active site" description="Proton acceptor" evidence="2">
    <location>
        <position position="38"/>
    </location>
</feature>
<feature type="active site" description="Proton donor" evidence="2">
    <location>
        <position position="145"/>
    </location>
</feature>
<feature type="binding site" evidence="1">
    <location>
        <begin position="61"/>
        <end position="65"/>
    </location>
    <ligand>
        <name>substrate</name>
    </ligand>
</feature>
<feature type="binding site" evidence="1">
    <location>
        <position position="86"/>
    </location>
    <ligand>
        <name>substrate</name>
    </ligand>
</feature>
<feature type="binding site" evidence="1">
    <location>
        <position position="105"/>
    </location>
    <ligand>
        <name>substrate</name>
    </ligand>
</feature>
<feature type="site" description="Facilitates cleavage of polynucleotide substrates" evidence="3">
    <location>
        <position position="59"/>
    </location>
</feature>
<feature type="site" description="Critical for catalytic activity" evidence="4">
    <location>
        <position position="61"/>
    </location>
</feature>
<feature type="glycosylation site" description="N-linked (GlcNAc...) asparagine" evidence="5">
    <location>
        <position position="55"/>
    </location>
</feature>
<feature type="glycosylation site" description="N-linked (GlcNAc...) asparagine" evidence="5">
    <location>
        <position position="100"/>
    </location>
</feature>
<feature type="disulfide bond" evidence="3">
    <location>
        <begin position="46"/>
        <end position="104"/>
    </location>
</feature>
<feature type="disulfide bond" evidence="3">
    <location>
        <begin position="60"/>
        <end position="114"/>
    </location>
</feature>
<feature type="disulfide bond" evidence="3">
    <location>
        <begin position="78"/>
        <end position="129"/>
    </location>
</feature>
<feature type="disulfide bond" evidence="3">
    <location>
        <begin position="85"/>
        <end position="92"/>
    </location>
</feature>
<sequence>MVLCFPLLLLVLVLWGQVCPLHAIPKHLTKAHWFEIQHIRPSPLQCNRAMSGINNYTQHCKPQNTFLHDSFQNVAAVCDLLSITCKNGWHNCHQSLKPVNMTDCRLTSGKYPQCRYSAAAQYKLFIVACDPPQKSDPPYKLVPVHLDSIL</sequence>
<reference key="1">
    <citation type="journal article" date="1998" name="Genome Res.">
        <title>Ribonuclease k6: chromosomal mapping and divergent rates of evolution within the RNase A gene superfamily.</title>
        <authorList>
            <person name="Deming M.S."/>
            <person name="Dyer K.D."/>
            <person name="Bankier A.T."/>
            <person name="Piper M.B."/>
            <person name="Dear P.H."/>
            <person name="Rosenberg H.F."/>
        </authorList>
    </citation>
    <scope>NUCLEOTIDE SEQUENCE [GENOMIC DNA]</scope>
</reference>